<dbReference type="EMBL" id="BC121924">
    <property type="protein sequence ID" value="AAI21925.1"/>
    <property type="molecule type" value="mRNA"/>
</dbReference>
<dbReference type="RefSeq" id="NP_001072493.1">
    <property type="nucleotide sequence ID" value="NM_001079025.1"/>
</dbReference>
<dbReference type="RefSeq" id="XP_017946833.1">
    <property type="nucleotide sequence ID" value="XM_018091344.2"/>
</dbReference>
<dbReference type="SMR" id="Q0P4S5"/>
<dbReference type="FunCoup" id="Q0P4S5">
    <property type="interactions" value="762"/>
</dbReference>
<dbReference type="STRING" id="8364.ENSXETP00000004824"/>
<dbReference type="PaxDb" id="8364-ENSXETP00000022862"/>
<dbReference type="GeneID" id="779948"/>
<dbReference type="KEGG" id="xtr:779948"/>
<dbReference type="AGR" id="Xenbase:XB-GENE-978173"/>
<dbReference type="CTD" id="9767"/>
<dbReference type="Xenbase" id="XB-GENE-978173">
    <property type="gene designation" value="jade3"/>
</dbReference>
<dbReference type="eggNOG" id="KOG0954">
    <property type="taxonomic scope" value="Eukaryota"/>
</dbReference>
<dbReference type="HOGENOM" id="CLU_016215_1_0_1"/>
<dbReference type="InParanoid" id="Q0P4S5"/>
<dbReference type="OrthoDB" id="20839at2759"/>
<dbReference type="TreeFam" id="TF316118"/>
<dbReference type="Proteomes" id="UP000008143">
    <property type="component" value="Chromosome 2"/>
</dbReference>
<dbReference type="GO" id="GO:0008270">
    <property type="term" value="F:zinc ion binding"/>
    <property type="evidence" value="ECO:0007669"/>
    <property type="project" value="UniProtKB-KW"/>
</dbReference>
<dbReference type="CDD" id="cd15706">
    <property type="entry name" value="ePHD_JADE3"/>
    <property type="match status" value="1"/>
</dbReference>
<dbReference type="CDD" id="cd15681">
    <property type="entry name" value="PHD_JADE3"/>
    <property type="match status" value="1"/>
</dbReference>
<dbReference type="FunFam" id="3.30.40.10:FF:000004">
    <property type="entry name" value="Jade family PHD finger 2"/>
    <property type="match status" value="1"/>
</dbReference>
<dbReference type="FunFam" id="3.30.40.10:FF:000030">
    <property type="entry name" value="Protein Jade-1 isoform 1"/>
    <property type="match status" value="1"/>
</dbReference>
<dbReference type="Gene3D" id="3.30.40.10">
    <property type="entry name" value="Zinc/RING finger domain, C3HC4 (zinc finger)"/>
    <property type="match status" value="2"/>
</dbReference>
<dbReference type="InterPro" id="IPR019542">
    <property type="entry name" value="Enhancer_polycomb-like_N"/>
</dbReference>
<dbReference type="InterPro" id="IPR034732">
    <property type="entry name" value="EPHD"/>
</dbReference>
<dbReference type="InterPro" id="IPR050701">
    <property type="entry name" value="Histone_Mod_Regulator"/>
</dbReference>
<dbReference type="InterPro" id="IPR039550">
    <property type="entry name" value="JADE3_PHD"/>
</dbReference>
<dbReference type="InterPro" id="IPR019786">
    <property type="entry name" value="Zinc_finger_PHD-type_CS"/>
</dbReference>
<dbReference type="InterPro" id="IPR011011">
    <property type="entry name" value="Znf_FYVE_PHD"/>
</dbReference>
<dbReference type="InterPro" id="IPR001965">
    <property type="entry name" value="Znf_PHD"/>
</dbReference>
<dbReference type="InterPro" id="IPR019787">
    <property type="entry name" value="Znf_PHD-finger"/>
</dbReference>
<dbReference type="InterPro" id="IPR013083">
    <property type="entry name" value="Znf_RING/FYVE/PHD"/>
</dbReference>
<dbReference type="PANTHER" id="PTHR13793">
    <property type="entry name" value="PHD FINGER PROTEINS"/>
    <property type="match status" value="1"/>
</dbReference>
<dbReference type="PANTHER" id="PTHR13793:SF27">
    <property type="entry name" value="PROTEIN JADE-3"/>
    <property type="match status" value="1"/>
</dbReference>
<dbReference type="Pfam" id="PF10513">
    <property type="entry name" value="EPL1"/>
    <property type="match status" value="1"/>
</dbReference>
<dbReference type="Pfam" id="PF13831">
    <property type="entry name" value="PHD_2"/>
    <property type="match status" value="1"/>
</dbReference>
<dbReference type="Pfam" id="PF13832">
    <property type="entry name" value="zf-HC5HC2H_2"/>
    <property type="match status" value="1"/>
</dbReference>
<dbReference type="SMART" id="SM00249">
    <property type="entry name" value="PHD"/>
    <property type="match status" value="2"/>
</dbReference>
<dbReference type="SUPFAM" id="SSF57903">
    <property type="entry name" value="FYVE/PHD zinc finger"/>
    <property type="match status" value="1"/>
</dbReference>
<dbReference type="PROSITE" id="PS51805">
    <property type="entry name" value="EPHD"/>
    <property type="match status" value="1"/>
</dbReference>
<dbReference type="PROSITE" id="PS01359">
    <property type="entry name" value="ZF_PHD_1"/>
    <property type="match status" value="1"/>
</dbReference>
<dbReference type="PROSITE" id="PS50016">
    <property type="entry name" value="ZF_PHD_2"/>
    <property type="match status" value="1"/>
</dbReference>
<proteinExistence type="evidence at transcript level"/>
<organism>
    <name type="scientific">Xenopus tropicalis</name>
    <name type="common">Western clawed frog</name>
    <name type="synonym">Silurana tropicalis</name>
    <dbReference type="NCBI Taxonomy" id="8364"/>
    <lineage>
        <taxon>Eukaryota</taxon>
        <taxon>Metazoa</taxon>
        <taxon>Chordata</taxon>
        <taxon>Craniata</taxon>
        <taxon>Vertebrata</taxon>
        <taxon>Euteleostomi</taxon>
        <taxon>Amphibia</taxon>
        <taxon>Batrachia</taxon>
        <taxon>Anura</taxon>
        <taxon>Pipoidea</taxon>
        <taxon>Pipidae</taxon>
        <taxon>Xenopodinae</taxon>
        <taxon>Xenopus</taxon>
        <taxon>Silurana</taxon>
    </lineage>
</organism>
<reference key="1">
    <citation type="submission" date="2006-08" db="EMBL/GenBank/DDBJ databases">
        <authorList>
            <consortium name="NIH - Xenopus Gene Collection (XGC) project"/>
        </authorList>
    </citation>
    <scope>NUCLEOTIDE SEQUENCE [LARGE SCALE MRNA]</scope>
    <source>
        <tissue>Testis</tissue>
    </source>
</reference>
<feature type="chain" id="PRO_0000253536" description="Protein Jade-3">
    <location>
        <begin position="1"/>
        <end position="817"/>
    </location>
</feature>
<feature type="zinc finger region" description="PHD-type 1" evidence="2">
    <location>
        <begin position="202"/>
        <end position="252"/>
    </location>
</feature>
<feature type="zinc finger region" description="C2HC pre-PHD-type" evidence="3">
    <location>
        <begin position="254"/>
        <end position="288"/>
    </location>
</feature>
<feature type="zinc finger region" description="PHD-type 2" evidence="3">
    <location>
        <begin position="312"/>
        <end position="368"/>
    </location>
</feature>
<feature type="region of interest" description="Disordered" evidence="4">
    <location>
        <begin position="1"/>
        <end position="38"/>
    </location>
</feature>
<feature type="region of interest" description="Disordered" evidence="4">
    <location>
        <begin position="375"/>
        <end position="396"/>
    </location>
</feature>
<feature type="region of interest" description="Disordered" evidence="4">
    <location>
        <begin position="665"/>
        <end position="689"/>
    </location>
</feature>
<feature type="region of interest" description="Disordered" evidence="4">
    <location>
        <begin position="719"/>
        <end position="817"/>
    </location>
</feature>
<feature type="compositionally biased region" description="Low complexity" evidence="4">
    <location>
        <begin position="8"/>
        <end position="24"/>
    </location>
</feature>
<feature type="compositionally biased region" description="Basic and acidic residues" evidence="4">
    <location>
        <begin position="379"/>
        <end position="396"/>
    </location>
</feature>
<feature type="compositionally biased region" description="Polar residues" evidence="4">
    <location>
        <begin position="667"/>
        <end position="689"/>
    </location>
</feature>
<feature type="compositionally biased region" description="Basic and acidic residues" evidence="4">
    <location>
        <begin position="722"/>
        <end position="743"/>
    </location>
</feature>
<feature type="compositionally biased region" description="Polar residues" evidence="4">
    <location>
        <begin position="747"/>
        <end position="758"/>
    </location>
</feature>
<feature type="compositionally biased region" description="Basic and acidic residues" evidence="4">
    <location>
        <begin position="777"/>
        <end position="799"/>
    </location>
</feature>
<feature type="compositionally biased region" description="Basic residues" evidence="4">
    <location>
        <begin position="801"/>
        <end position="810"/>
    </location>
</feature>
<gene>
    <name type="primary">jade3</name>
    <name type="synonym">phf16</name>
</gene>
<name>JADE3_XENTR</name>
<accession>Q0P4S5</accession>
<comment type="function">
    <text evidence="1">Scaffold subunit of some HBO1 complexes, which have a histone H4 acetyltransferase activity.</text>
</comment>
<comment type="subunit">
    <text evidence="1">Component of the HBO1 complex.</text>
</comment>
<comment type="similarity">
    <text evidence="5">Belongs to the JADE family.</text>
</comment>
<protein>
    <recommendedName>
        <fullName>Protein Jade-3</fullName>
    </recommendedName>
    <alternativeName>
        <fullName>Jade family PHD finger protein 3</fullName>
    </alternativeName>
    <alternativeName>
        <fullName>PHD finger protein 16</fullName>
    </alternativeName>
</protein>
<evidence type="ECO:0000250" key="1">
    <source>
        <dbReference type="UniProtKB" id="Q92613"/>
    </source>
</evidence>
<evidence type="ECO:0000255" key="2">
    <source>
        <dbReference type="PROSITE-ProRule" id="PRU00146"/>
    </source>
</evidence>
<evidence type="ECO:0000255" key="3">
    <source>
        <dbReference type="PROSITE-ProRule" id="PRU01146"/>
    </source>
</evidence>
<evidence type="ECO:0000256" key="4">
    <source>
        <dbReference type="SAM" id="MobiDB-lite"/>
    </source>
</evidence>
<evidence type="ECO:0000305" key="5"/>
<sequence>MKRLRNLSSSDSSDNESPSTSFSSCFQHKGKGKCTADDGKKSAEVFRKDLISAMKIPDSQHVNPEEYYQFADTWKQEWEKGVQVPSNPENIPQPSLRVIAEKAKEVLFTRPRKYIHCSSQEPAEPGYINILELAESMCRYDLDDLDLYWLGECNLELADMGCAPVDESTMEKTLEVLERQCHENMNHAIETEEGLGIEYDEDVICDVCRSPDSEEGNDMVFCDRCNICVHQACYGILKVPEGSWLCRTCVLGLHPQCILCPKTGGAMKATRTGTKWAHVSCALWIPEVSIACPERMEPITKVSHIPPSRWALVCSLCKLKTGACIQCSVKSCITAFHVTCAFEHSLEMKTILDEGDEVKFKSYCLKHSKNKHGLISEQEEPHKTHSDNRPTESERTSLRAQKLKELEEDFYTLVKVEDVAAELGLPMLTVDFIYSFWKLKRKSNFNKPLLTPKEDEQNGLVQPKEDSIHTRMRMFMHLRQDLERVRNLCYMVNRREKLKLSHSKMHEEIFNLQVQLVNQEVAAGQPLSNALENTLFYPPPRITLKLKMPKPRTRDCRISSVKAGTMSSPDNQNSSATYHGMGGEVHRQSSEHTKLYSTYASEQRNNGLLGGITRFHKEFQGTGCKPSSRFRSSGKPMSLQAVIHGQSSNGSGKVQHEHVSLARANGVLSSGDRTQRDSSSQTSPGQNSEIICHIAGQSTFRKANMEHFSRSFKEATNNLVRTTEDLRSSEKPQRRQSVKERLWSKQPADTQTSGTPYQDNDGYCPDLELSDSEAESDENKDHMLLRRNSRESPNRDSCRNSRIRGKRKMTSHSSVQR</sequence>
<keyword id="KW-0479">Metal-binding</keyword>
<keyword id="KW-1185">Reference proteome</keyword>
<keyword id="KW-0677">Repeat</keyword>
<keyword id="KW-0862">Zinc</keyword>
<keyword id="KW-0863">Zinc-finger</keyword>